<sequence length="138" mass="15186">MSGTLLAFDFGTKSIGVAVGQRITGTARPLPAIKAQDGTPDWNLIERLLKEWQPDEIIVGLPLNMDGTEQPLTARARKFANRIHGRFGVEVKLHDERLSTVEARSGLFEQGGYRALNKGKVDSASAVIILESYFEQGY</sequence>
<evidence type="ECO:0000255" key="1">
    <source>
        <dbReference type="HAMAP-Rule" id="MF_00651"/>
    </source>
</evidence>
<feature type="chain" id="PRO_0000257588" description="Putative pre-16S rRNA nuclease">
    <location>
        <begin position="1"/>
        <end position="138"/>
    </location>
</feature>
<comment type="function">
    <text evidence="1">Could be a nuclease involved in processing of the 5'-end of pre-16S rRNA.</text>
</comment>
<comment type="subcellular location">
    <subcellularLocation>
        <location evidence="1">Cytoplasm</location>
    </subcellularLocation>
</comment>
<comment type="similarity">
    <text evidence="1">Belongs to the YqgF nuclease family.</text>
</comment>
<reference key="1">
    <citation type="journal article" date="2005" name="Nucleic Acids Res.">
        <title>Genome dynamics and diversity of Shigella species, the etiologic agents of bacillary dysentery.</title>
        <authorList>
            <person name="Yang F."/>
            <person name="Yang J."/>
            <person name="Zhang X."/>
            <person name="Chen L."/>
            <person name="Jiang Y."/>
            <person name="Yan Y."/>
            <person name="Tang X."/>
            <person name="Wang J."/>
            <person name="Xiong Z."/>
            <person name="Dong J."/>
            <person name="Xue Y."/>
            <person name="Zhu Y."/>
            <person name="Xu X."/>
            <person name="Sun L."/>
            <person name="Chen S."/>
            <person name="Nie H."/>
            <person name="Peng J."/>
            <person name="Xu J."/>
            <person name="Wang Y."/>
            <person name="Yuan Z."/>
            <person name="Wen Y."/>
            <person name="Yao Z."/>
            <person name="Shen Y."/>
            <person name="Qiang B."/>
            <person name="Hou Y."/>
            <person name="Yu J."/>
            <person name="Jin Q."/>
        </authorList>
    </citation>
    <scope>NUCLEOTIDE SEQUENCE [LARGE SCALE GENOMIC DNA]</scope>
    <source>
        <strain>Sb227</strain>
    </source>
</reference>
<protein>
    <recommendedName>
        <fullName evidence="1">Putative pre-16S rRNA nuclease</fullName>
        <ecNumber evidence="1">3.1.-.-</ecNumber>
    </recommendedName>
</protein>
<gene>
    <name evidence="1" type="primary">yqgF</name>
    <name type="ordered locus">SBO_3041</name>
</gene>
<organism>
    <name type="scientific">Shigella boydii serotype 4 (strain Sb227)</name>
    <dbReference type="NCBI Taxonomy" id="300268"/>
    <lineage>
        <taxon>Bacteria</taxon>
        <taxon>Pseudomonadati</taxon>
        <taxon>Pseudomonadota</taxon>
        <taxon>Gammaproteobacteria</taxon>
        <taxon>Enterobacterales</taxon>
        <taxon>Enterobacteriaceae</taxon>
        <taxon>Shigella</taxon>
    </lineage>
</organism>
<accession>Q31WL1</accession>
<keyword id="KW-0963">Cytoplasm</keyword>
<keyword id="KW-0378">Hydrolase</keyword>
<keyword id="KW-0540">Nuclease</keyword>
<keyword id="KW-0690">Ribosome biogenesis</keyword>
<proteinExistence type="inferred from homology"/>
<name>YQGF_SHIBS</name>
<dbReference type="EC" id="3.1.-.-" evidence="1"/>
<dbReference type="EMBL" id="CP000036">
    <property type="protein sequence ID" value="ABB67547.1"/>
    <property type="molecule type" value="Genomic_DNA"/>
</dbReference>
<dbReference type="SMR" id="Q31WL1"/>
<dbReference type="KEGG" id="sbo:SBO_3041"/>
<dbReference type="HOGENOM" id="CLU_098240_3_0_6"/>
<dbReference type="Proteomes" id="UP000007067">
    <property type="component" value="Chromosome"/>
</dbReference>
<dbReference type="GO" id="GO:0005829">
    <property type="term" value="C:cytosol"/>
    <property type="evidence" value="ECO:0007669"/>
    <property type="project" value="TreeGrafter"/>
</dbReference>
<dbReference type="GO" id="GO:0004518">
    <property type="term" value="F:nuclease activity"/>
    <property type="evidence" value="ECO:0007669"/>
    <property type="project" value="UniProtKB-KW"/>
</dbReference>
<dbReference type="GO" id="GO:0000967">
    <property type="term" value="P:rRNA 5'-end processing"/>
    <property type="evidence" value="ECO:0007669"/>
    <property type="project" value="UniProtKB-UniRule"/>
</dbReference>
<dbReference type="CDD" id="cd16964">
    <property type="entry name" value="YqgF"/>
    <property type="match status" value="1"/>
</dbReference>
<dbReference type="FunFam" id="3.30.420.140:FF:000002">
    <property type="entry name" value="Putative pre-16S rRNA nuclease"/>
    <property type="match status" value="1"/>
</dbReference>
<dbReference type="Gene3D" id="3.30.420.140">
    <property type="entry name" value="YqgF/RNase H-like domain"/>
    <property type="match status" value="1"/>
</dbReference>
<dbReference type="HAMAP" id="MF_00651">
    <property type="entry name" value="Nuclease_YqgF"/>
    <property type="match status" value="1"/>
</dbReference>
<dbReference type="InterPro" id="IPR012337">
    <property type="entry name" value="RNaseH-like_sf"/>
</dbReference>
<dbReference type="InterPro" id="IPR005227">
    <property type="entry name" value="YqgF"/>
</dbReference>
<dbReference type="InterPro" id="IPR006641">
    <property type="entry name" value="YqgF/RNaseH-like_dom"/>
</dbReference>
<dbReference type="InterPro" id="IPR037027">
    <property type="entry name" value="YqgF/RNaseH-like_dom_sf"/>
</dbReference>
<dbReference type="NCBIfam" id="TIGR00250">
    <property type="entry name" value="RNAse_H_YqgF"/>
    <property type="match status" value="1"/>
</dbReference>
<dbReference type="PANTHER" id="PTHR33317">
    <property type="entry name" value="POLYNUCLEOTIDYL TRANSFERASE, RIBONUCLEASE H-LIKE SUPERFAMILY PROTEIN"/>
    <property type="match status" value="1"/>
</dbReference>
<dbReference type="PANTHER" id="PTHR33317:SF4">
    <property type="entry name" value="POLYNUCLEOTIDYL TRANSFERASE, RIBONUCLEASE H-LIKE SUPERFAMILY PROTEIN"/>
    <property type="match status" value="1"/>
</dbReference>
<dbReference type="Pfam" id="PF03652">
    <property type="entry name" value="RuvX"/>
    <property type="match status" value="1"/>
</dbReference>
<dbReference type="SMART" id="SM00732">
    <property type="entry name" value="YqgFc"/>
    <property type="match status" value="1"/>
</dbReference>
<dbReference type="SUPFAM" id="SSF53098">
    <property type="entry name" value="Ribonuclease H-like"/>
    <property type="match status" value="1"/>
</dbReference>